<name>MDL1_PRUDU</name>
<dbReference type="EC" id="4.1.2.10"/>
<dbReference type="EMBL" id="Y08211">
    <property type="protein sequence ID" value="CAA69388.1"/>
    <property type="molecule type" value="mRNA"/>
</dbReference>
<dbReference type="PDB" id="5EB4">
    <property type="method" value="X-ray"/>
    <property type="resolution" value="2.30 A"/>
    <property type="chains" value="A/B=28-559"/>
</dbReference>
<dbReference type="PDB" id="5EB5">
    <property type="method" value="X-ray"/>
    <property type="resolution" value="2.80 A"/>
    <property type="chains" value="A/B=28-559"/>
</dbReference>
<dbReference type="PDB" id="6JBY">
    <property type="method" value="X-ray"/>
    <property type="resolution" value="1.60 A"/>
    <property type="chains" value="A=26-559"/>
</dbReference>
<dbReference type="PDB" id="6LQY">
    <property type="method" value="X-ray"/>
    <property type="resolution" value="1.60 A"/>
    <property type="chains" value="A=28-558"/>
</dbReference>
<dbReference type="PDB" id="6LR8">
    <property type="method" value="X-ray"/>
    <property type="resolution" value="1.59 A"/>
    <property type="chains" value="A=28-558"/>
</dbReference>
<dbReference type="PDB" id="7BWP">
    <property type="method" value="X-ray"/>
    <property type="resolution" value="1.80 A"/>
    <property type="chains" value="A=28-558"/>
</dbReference>
<dbReference type="PDB" id="7CGS">
    <property type="method" value="X-ray"/>
    <property type="resolution" value="1.60 A"/>
    <property type="chains" value="A=28-558"/>
</dbReference>
<dbReference type="PDBsum" id="5EB4"/>
<dbReference type="PDBsum" id="5EB5"/>
<dbReference type="PDBsum" id="6JBY"/>
<dbReference type="PDBsum" id="6LQY"/>
<dbReference type="PDBsum" id="6LR8"/>
<dbReference type="PDBsum" id="7BWP"/>
<dbReference type="PDBsum" id="7CGS"/>
<dbReference type="SMR" id="O24243"/>
<dbReference type="GlyCosmos" id="O24243">
    <property type="glycosylation" value="13 sites, No reported glycans"/>
</dbReference>
<dbReference type="BRENDA" id="4.1.2.10">
    <property type="organism ID" value="5059"/>
</dbReference>
<dbReference type="EvolutionaryTrace" id="O24243"/>
<dbReference type="GO" id="GO:0050660">
    <property type="term" value="F:flavin adenine dinucleotide binding"/>
    <property type="evidence" value="ECO:0007669"/>
    <property type="project" value="InterPro"/>
</dbReference>
<dbReference type="GO" id="GO:0046593">
    <property type="term" value="F:mandelonitrile lyase activity"/>
    <property type="evidence" value="ECO:0007669"/>
    <property type="project" value="UniProtKB-EC"/>
</dbReference>
<dbReference type="GO" id="GO:0016614">
    <property type="term" value="F:oxidoreductase activity, acting on CH-OH group of donors"/>
    <property type="evidence" value="ECO:0007669"/>
    <property type="project" value="InterPro"/>
</dbReference>
<dbReference type="Gene3D" id="3.30.410.40">
    <property type="match status" value="1"/>
</dbReference>
<dbReference type="Gene3D" id="3.50.50.60">
    <property type="entry name" value="FAD/NAD(P)-binding domain"/>
    <property type="match status" value="1"/>
</dbReference>
<dbReference type="InterPro" id="IPR036188">
    <property type="entry name" value="FAD/NAD-bd_sf"/>
</dbReference>
<dbReference type="InterPro" id="IPR001613">
    <property type="entry name" value="Flavin_amine_oxidase"/>
</dbReference>
<dbReference type="InterPro" id="IPR051871">
    <property type="entry name" value="GMC_Oxidoreductase-Related"/>
</dbReference>
<dbReference type="InterPro" id="IPR012132">
    <property type="entry name" value="GMC_OxRdtase"/>
</dbReference>
<dbReference type="InterPro" id="IPR000172">
    <property type="entry name" value="GMC_OxRdtase_N"/>
</dbReference>
<dbReference type="InterPro" id="IPR007867">
    <property type="entry name" value="GMC_OxRtase_C"/>
</dbReference>
<dbReference type="PANTHER" id="PTHR45968:SF23">
    <property type="entry name" value="GLUCOSE-METHANOL-CHOLINE OXIDOREDUCTASE N-TERMINAL DOMAIN-CONTAINING PROTEIN"/>
    <property type="match status" value="1"/>
</dbReference>
<dbReference type="PANTHER" id="PTHR45968">
    <property type="entry name" value="OSJNBA0019K04.7 PROTEIN"/>
    <property type="match status" value="1"/>
</dbReference>
<dbReference type="Pfam" id="PF05199">
    <property type="entry name" value="GMC_oxred_C"/>
    <property type="match status" value="1"/>
</dbReference>
<dbReference type="Pfam" id="PF00732">
    <property type="entry name" value="GMC_oxred_N"/>
    <property type="match status" value="1"/>
</dbReference>
<dbReference type="PIRSF" id="PIRSF000137">
    <property type="entry name" value="Alcohol_oxidase"/>
    <property type="match status" value="1"/>
</dbReference>
<dbReference type="PRINTS" id="PR00757">
    <property type="entry name" value="AMINEOXDASEF"/>
</dbReference>
<dbReference type="SUPFAM" id="SSF54373">
    <property type="entry name" value="FAD-linked reductases, C-terminal domain"/>
    <property type="match status" value="1"/>
</dbReference>
<dbReference type="SUPFAM" id="SSF51905">
    <property type="entry name" value="FAD/NAD(P)-binding domain"/>
    <property type="match status" value="1"/>
</dbReference>
<dbReference type="PROSITE" id="PS00623">
    <property type="entry name" value="GMC_OXRED_1"/>
    <property type="match status" value="1"/>
</dbReference>
<dbReference type="PROSITE" id="PS00624">
    <property type="entry name" value="GMC_OXRED_2"/>
    <property type="match status" value="1"/>
</dbReference>
<accession>O24243</accession>
<sequence length="559" mass="61100">MEKSTMSVILFVLHLLVLHLQYSEVHSLANTSAHDFSYLKFVYNATDTSLEGSYDYIVIGGGTSGCPLAATLSEKYKVLLLERGTIATEYPNTLTADGFAYNLQQQDDGKTPVERFVSEDGIDNVRARILGGTTIINAGVYARANISFYSQTGIEWDLDLVNKTYEWVEDAIVVKPNNQSWQSVIGEGFLEAGILPDNGFSLDHEAGTRLTGSTFDNNGTRHAADELLNKGDPNNLLVAVQASVEKILFSSNTSNLSAIGVIYTDSDGNSHQAFVRGNGEVIVSAGTIGTPQLLLLSGVGPESYLSSLNITVVQPNPYVGQFLYNNPRNFINNFPPNPIEASVVTVLGIRSDYYQVSLSSLPFSTPPFSLFPTTSYPLPNSTFAHIVSQVPGPLSHGSVTLNSSSDVRIAPNIKFNYYSNSTDLANCVSGMKKLGDLLRTKALEPYKARDVLGIDGFNYLGVPLPENQTDDASFETFCLDNVASYWHYHGGSLVGKVLDDSFRVMGIKALRVVDASTFPYEPNSHPQGFYLMLGRYVGLQILQERSIRLEAIHNIQESM</sequence>
<feature type="signal peptide" evidence="1">
    <location>
        <begin position="1"/>
        <end position="27"/>
    </location>
</feature>
<feature type="chain" id="PRO_0000012344" description="(R)-mandelonitrile lyase 1">
    <location>
        <begin position="28"/>
        <end position="559"/>
    </location>
</feature>
<feature type="active site" description="Proton donor" evidence="1">
    <location>
        <position position="487"/>
    </location>
</feature>
<feature type="active site" description="Proton acceptor" evidence="1">
    <location>
        <position position="525"/>
    </location>
</feature>
<feature type="binding site" evidence="1">
    <location>
        <begin position="63"/>
        <end position="64"/>
    </location>
    <ligand>
        <name>FAD</name>
        <dbReference type="ChEBI" id="CHEBI:57692"/>
    </ligand>
</feature>
<feature type="binding site" evidence="1">
    <location>
        <begin position="82"/>
        <end position="83"/>
    </location>
    <ligand>
        <name>FAD</name>
        <dbReference type="ChEBI" id="CHEBI:57692"/>
    </ligand>
</feature>
<feature type="binding site" evidence="1">
    <location>
        <position position="133"/>
    </location>
    <ligand>
        <name>FAD</name>
        <dbReference type="ChEBI" id="CHEBI:57692"/>
    </ligand>
</feature>
<feature type="binding site" evidence="1">
    <location>
        <begin position="137"/>
        <end position="140"/>
    </location>
    <ligand>
        <name>FAD</name>
        <dbReference type="ChEBI" id="CHEBI:57692"/>
    </ligand>
</feature>
<feature type="binding site" evidence="1">
    <location>
        <position position="244"/>
    </location>
    <ligand>
        <name>FAD</name>
        <dbReference type="ChEBI" id="CHEBI:57692"/>
    </ligand>
</feature>
<feature type="binding site" evidence="1">
    <location>
        <position position="485"/>
    </location>
    <ligand>
        <name>substrate</name>
    </ligand>
</feature>
<feature type="binding site" evidence="1">
    <location>
        <begin position="486"/>
        <end position="487"/>
    </location>
    <ligand>
        <name>FAD</name>
        <dbReference type="ChEBI" id="CHEBI:57692"/>
    </ligand>
</feature>
<feature type="binding site" evidence="1">
    <location>
        <begin position="526"/>
        <end position="527"/>
    </location>
    <ligand>
        <name>FAD</name>
        <dbReference type="ChEBI" id="CHEBI:57692"/>
    </ligand>
</feature>
<feature type="glycosylation site" description="N-linked (GlcNAc...) asparagine" evidence="2">
    <location>
        <position position="30"/>
    </location>
</feature>
<feature type="glycosylation site" description="N-linked (GlcNAc...) asparagine" evidence="2">
    <location>
        <position position="44"/>
    </location>
</feature>
<feature type="glycosylation site" description="N-linked (GlcNAc...) asparagine" evidence="2">
    <location>
        <position position="145"/>
    </location>
</feature>
<feature type="glycosylation site" description="N-linked (GlcNAc...) asparagine" evidence="2">
    <location>
        <position position="162"/>
    </location>
</feature>
<feature type="glycosylation site" description="N-linked (GlcNAc...) asparagine" evidence="2">
    <location>
        <position position="178"/>
    </location>
</feature>
<feature type="glycosylation site" description="N-linked (GlcNAc...) asparagine" evidence="2">
    <location>
        <position position="218"/>
    </location>
</feature>
<feature type="glycosylation site" description="N-linked (GlcNAc...) asparagine" evidence="2">
    <location>
        <position position="252"/>
    </location>
</feature>
<feature type="glycosylation site" description="N-linked (GlcNAc...) asparagine" evidence="2">
    <location>
        <position position="255"/>
    </location>
</feature>
<feature type="glycosylation site" description="N-linked (GlcNAc...) asparagine" evidence="2">
    <location>
        <position position="309"/>
    </location>
</feature>
<feature type="glycosylation site" description="N-linked (GlcNAc...) asparagine" evidence="2">
    <location>
        <position position="380"/>
    </location>
</feature>
<feature type="glycosylation site" description="N-linked (GlcNAc...) asparagine" evidence="2">
    <location>
        <position position="402"/>
    </location>
</feature>
<feature type="glycosylation site" description="N-linked (GlcNAc...) asparagine" evidence="2">
    <location>
        <position position="420"/>
    </location>
</feature>
<feature type="glycosylation site" description="N-linked (GlcNAc...) asparagine" evidence="2">
    <location>
        <position position="467"/>
    </location>
</feature>
<feature type="disulfide bond" evidence="1">
    <location>
        <begin position="427"/>
        <end position="478"/>
    </location>
</feature>
<feature type="helix" evidence="6">
    <location>
        <begin position="37"/>
        <end position="41"/>
    </location>
</feature>
<feature type="strand" evidence="6">
    <location>
        <begin position="42"/>
        <end position="44"/>
    </location>
</feature>
<feature type="helix" evidence="4">
    <location>
        <begin position="45"/>
        <end position="47"/>
    </location>
</feature>
<feature type="helix" evidence="6">
    <location>
        <begin position="48"/>
        <end position="50"/>
    </location>
</feature>
<feature type="strand" evidence="6">
    <location>
        <begin position="52"/>
        <end position="59"/>
    </location>
</feature>
<feature type="helix" evidence="6">
    <location>
        <begin position="65"/>
        <end position="72"/>
    </location>
</feature>
<feature type="turn" evidence="6">
    <location>
        <begin position="73"/>
        <end position="75"/>
    </location>
</feature>
<feature type="strand" evidence="6">
    <location>
        <begin position="78"/>
        <end position="85"/>
    </location>
</feature>
<feature type="helix" evidence="6">
    <location>
        <begin position="87"/>
        <end position="89"/>
    </location>
</feature>
<feature type="helix" evidence="6">
    <location>
        <begin position="91"/>
        <end position="94"/>
    </location>
</feature>
<feature type="helix" evidence="6">
    <location>
        <begin position="96"/>
        <end position="98"/>
    </location>
</feature>
<feature type="helix" evidence="6">
    <location>
        <begin position="99"/>
        <end position="104"/>
    </location>
</feature>
<feature type="strand" evidence="6">
    <location>
        <begin position="109"/>
        <end position="117"/>
    </location>
</feature>
<feature type="strand" evidence="6">
    <location>
        <begin position="123"/>
        <end position="127"/>
    </location>
</feature>
<feature type="helix" evidence="6">
    <location>
        <begin position="132"/>
        <end position="135"/>
    </location>
</feature>
<feature type="helix" evidence="6">
    <location>
        <begin position="148"/>
        <end position="152"/>
    </location>
</feature>
<feature type="helix" evidence="6">
    <location>
        <begin position="158"/>
        <end position="172"/>
    </location>
</feature>
<feature type="helix" evidence="6">
    <location>
        <begin position="180"/>
        <end position="191"/>
    </location>
</feature>
<feature type="strand" evidence="6">
    <location>
        <begin position="197"/>
        <end position="200"/>
    </location>
</feature>
<feature type="strand" evidence="6">
    <location>
        <begin position="206"/>
        <end position="210"/>
    </location>
</feature>
<feature type="strand" evidence="6">
    <location>
        <begin position="212"/>
        <end position="215"/>
    </location>
</feature>
<feature type="strand" evidence="6">
    <location>
        <begin position="219"/>
        <end position="221"/>
    </location>
</feature>
<feature type="helix" evidence="6">
    <location>
        <begin position="224"/>
        <end position="230"/>
    </location>
</feature>
<feature type="turn" evidence="6">
    <location>
        <begin position="233"/>
        <end position="235"/>
    </location>
</feature>
<feature type="strand" evidence="6">
    <location>
        <begin position="236"/>
        <end position="241"/>
    </location>
</feature>
<feature type="strand" evidence="6">
    <location>
        <begin position="243"/>
        <end position="249"/>
    </location>
</feature>
<feature type="strand" evidence="6">
    <location>
        <begin position="257"/>
        <end position="264"/>
    </location>
</feature>
<feature type="strand" evidence="6">
    <location>
        <begin position="270"/>
        <end position="283"/>
    </location>
</feature>
<feature type="helix" evidence="6">
    <location>
        <begin position="286"/>
        <end position="296"/>
    </location>
</feature>
<feature type="helix" evidence="6">
    <location>
        <begin position="302"/>
        <end position="307"/>
    </location>
</feature>
<feature type="strand" evidence="6">
    <location>
        <begin position="313"/>
        <end position="315"/>
    </location>
</feature>
<feature type="turn" evidence="6">
    <location>
        <begin position="317"/>
        <end position="320"/>
    </location>
</feature>
<feature type="strand" evidence="6">
    <location>
        <begin position="321"/>
        <end position="324"/>
    </location>
</feature>
<feature type="strand" evidence="6">
    <location>
        <begin position="327"/>
        <end position="333"/>
    </location>
</feature>
<feature type="strand" evidence="6">
    <location>
        <begin position="346"/>
        <end position="350"/>
    </location>
</feature>
<feature type="strand" evidence="6">
    <location>
        <begin position="353"/>
        <end position="360"/>
    </location>
</feature>
<feature type="strand" evidence="6">
    <location>
        <begin position="371"/>
        <end position="374"/>
    </location>
</feature>
<feature type="strand" evidence="6">
    <location>
        <begin position="383"/>
        <end position="389"/>
    </location>
</feature>
<feature type="strand" evidence="6">
    <location>
        <begin position="397"/>
        <end position="400"/>
    </location>
</feature>
<feature type="strand" evidence="6">
    <location>
        <begin position="402"/>
        <end position="405"/>
    </location>
</feature>
<feature type="strand" evidence="5">
    <location>
        <begin position="407"/>
        <end position="409"/>
    </location>
</feature>
<feature type="strand" evidence="6">
    <location>
        <begin position="412"/>
        <end position="414"/>
    </location>
</feature>
<feature type="helix" evidence="6">
    <location>
        <begin position="421"/>
        <end position="438"/>
    </location>
</feature>
<feature type="turn" evidence="6">
    <location>
        <begin position="441"/>
        <end position="443"/>
    </location>
</feature>
<feature type="helix" evidence="6">
    <location>
        <begin position="444"/>
        <end position="446"/>
    </location>
</feature>
<feature type="helix" evidence="6">
    <location>
        <begin position="454"/>
        <end position="456"/>
    </location>
</feature>
<feature type="strand" evidence="6">
    <location>
        <begin position="459"/>
        <end position="461"/>
    </location>
</feature>
<feature type="helix" evidence="6">
    <location>
        <begin position="471"/>
        <end position="480"/>
    </location>
</feature>
<feature type="strand" evidence="6">
    <location>
        <begin position="489"/>
        <end position="492"/>
    </location>
</feature>
<feature type="turn" evidence="6">
    <location>
        <begin position="495"/>
        <end position="497"/>
    </location>
</feature>
<feature type="strand" evidence="7">
    <location>
        <begin position="502"/>
        <end position="504"/>
    </location>
</feature>
<feature type="strand" evidence="6">
    <location>
        <begin position="510"/>
        <end position="512"/>
    </location>
</feature>
<feature type="helix" evidence="6">
    <location>
        <begin position="515"/>
        <end position="517"/>
    </location>
</feature>
<feature type="strand" evidence="6">
    <location>
        <begin position="522"/>
        <end position="525"/>
    </location>
</feature>
<feature type="helix" evidence="6">
    <location>
        <begin position="527"/>
        <end position="545"/>
    </location>
</feature>
<proteinExistence type="evidence at protein level"/>
<organism>
    <name type="scientific">Prunus dulcis</name>
    <name type="common">Almond</name>
    <name type="synonym">Amygdalus dulcis</name>
    <dbReference type="NCBI Taxonomy" id="3755"/>
    <lineage>
        <taxon>Eukaryota</taxon>
        <taxon>Viridiplantae</taxon>
        <taxon>Streptophyta</taxon>
        <taxon>Embryophyta</taxon>
        <taxon>Tracheophyta</taxon>
        <taxon>Spermatophyta</taxon>
        <taxon>Magnoliopsida</taxon>
        <taxon>eudicotyledons</taxon>
        <taxon>Gunneridae</taxon>
        <taxon>Pentapetalae</taxon>
        <taxon>rosids</taxon>
        <taxon>fabids</taxon>
        <taxon>Rosales</taxon>
        <taxon>Rosaceae</taxon>
        <taxon>Amygdaloideae</taxon>
        <taxon>Amygdaleae</taxon>
        <taxon>Prunus</taxon>
    </lineage>
</organism>
<evidence type="ECO:0000250" key="1"/>
<evidence type="ECO:0000255" key="2"/>
<evidence type="ECO:0000305" key="3"/>
<evidence type="ECO:0007829" key="4">
    <source>
        <dbReference type="PDB" id="5EB4"/>
    </source>
</evidence>
<evidence type="ECO:0007829" key="5">
    <source>
        <dbReference type="PDB" id="5EB5"/>
    </source>
</evidence>
<evidence type="ECO:0007829" key="6">
    <source>
        <dbReference type="PDB" id="6LR8"/>
    </source>
</evidence>
<evidence type="ECO:0007829" key="7">
    <source>
        <dbReference type="PDB" id="7CGS"/>
    </source>
</evidence>
<comment type="function">
    <text evidence="1">Involved in cyanogenesis, the release of HCN from injured tissues. Catalyzes the stereospecific addition of HCN to a variety of aldehydes in vitro. It is a major seed constituent, and could have the additional role of a storage form for reduced nitrogen (By similarity).</text>
</comment>
<comment type="catalytic activity">
    <reaction>
        <text>(R)-mandelonitrile = benzaldehyde + hydrogen cyanide</text>
        <dbReference type="Rhea" id="RHEA:18313"/>
        <dbReference type="ChEBI" id="CHEBI:17169"/>
        <dbReference type="ChEBI" id="CHEBI:18407"/>
        <dbReference type="ChEBI" id="CHEBI:18450"/>
        <dbReference type="EC" id="4.1.2.10"/>
    </reaction>
</comment>
<comment type="cofactor">
    <cofactor evidence="1">
        <name>FAD</name>
        <dbReference type="ChEBI" id="CHEBI:57692"/>
    </cofactor>
</comment>
<comment type="subunit">
    <text evidence="1">Monomer.</text>
</comment>
<comment type="similarity">
    <text evidence="3">Belongs to the GMC oxidoreductase family.</text>
</comment>
<protein>
    <recommendedName>
        <fullName>(R)-mandelonitrile lyase 1</fullName>
        <ecNumber>4.1.2.10</ecNumber>
    </recommendedName>
    <alternativeName>
        <fullName>Hydroxynitrile lyase 1</fullName>
        <shortName>(R)-oxynitrilase 1</shortName>
    </alternativeName>
</protein>
<gene>
    <name type="primary">MDL1</name>
</gene>
<keyword id="KW-0002">3D-structure</keyword>
<keyword id="KW-1015">Disulfide bond</keyword>
<keyword id="KW-0274">FAD</keyword>
<keyword id="KW-0285">Flavoprotein</keyword>
<keyword id="KW-0325">Glycoprotein</keyword>
<keyword id="KW-0456">Lyase</keyword>
<keyword id="KW-0732">Signal</keyword>
<reference key="1">
    <citation type="submission" date="1996-09" db="EMBL/GenBank/DDBJ databases">
        <authorList>
            <person name="Suelves M."/>
        </authorList>
    </citation>
    <scope>NUCLEOTIDE SEQUENCE [MRNA]</scope>
    <source>
        <strain>cv. Texas</strain>
        <tissue>Flower</tissue>
    </source>
</reference>